<feature type="chain" id="PRO_1000082916" description="Phosphatidylserine decarboxylase beta chain" evidence="1">
    <location>
        <begin position="1"/>
        <end position="189"/>
    </location>
</feature>
<feature type="chain" id="PRO_1000082917" description="Phosphatidylserine decarboxylase alpha chain" evidence="1">
    <location>
        <begin position="190"/>
        <end position="232"/>
    </location>
</feature>
<feature type="active site" description="Schiff-base intermediate with substrate; via pyruvic acid" evidence="1">
    <location>
        <position position="190"/>
    </location>
</feature>
<feature type="site" description="Cleavage (non-hydrolytic); by autocatalysis" evidence="1">
    <location>
        <begin position="189"/>
        <end position="190"/>
    </location>
</feature>
<feature type="modified residue" description="Pyruvic acid (Ser); by autocatalysis" evidence="1">
    <location>
        <position position="190"/>
    </location>
</feature>
<name>PSD_BRUC2</name>
<comment type="function">
    <text evidence="1">Catalyzes the formation of phosphatidylethanolamine (PtdEtn) from phosphatidylserine (PtdSer).</text>
</comment>
<comment type="catalytic activity">
    <reaction evidence="1">
        <text>a 1,2-diacyl-sn-glycero-3-phospho-L-serine + H(+) = a 1,2-diacyl-sn-glycero-3-phosphoethanolamine + CO2</text>
        <dbReference type="Rhea" id="RHEA:20828"/>
        <dbReference type="ChEBI" id="CHEBI:15378"/>
        <dbReference type="ChEBI" id="CHEBI:16526"/>
        <dbReference type="ChEBI" id="CHEBI:57262"/>
        <dbReference type="ChEBI" id="CHEBI:64612"/>
        <dbReference type="EC" id="4.1.1.65"/>
    </reaction>
</comment>
<comment type="cofactor">
    <cofactor evidence="1">
        <name>pyruvate</name>
        <dbReference type="ChEBI" id="CHEBI:15361"/>
    </cofactor>
    <text evidence="1">Binds 1 pyruvoyl group covalently per subunit.</text>
</comment>
<comment type="pathway">
    <text evidence="1">Phospholipid metabolism; phosphatidylethanolamine biosynthesis; phosphatidylethanolamine from CDP-diacylglycerol: step 2/2.</text>
</comment>
<comment type="subunit">
    <text evidence="1">Heterodimer of a large membrane-associated beta subunit and a small pyruvoyl-containing alpha subunit.</text>
</comment>
<comment type="subcellular location">
    <subcellularLocation>
        <location evidence="1">Cell membrane</location>
        <topology evidence="1">Peripheral membrane protein</topology>
    </subcellularLocation>
</comment>
<comment type="PTM">
    <text evidence="1">Is synthesized initially as an inactive proenzyme. Formation of the active enzyme involves a self-maturation process in which the active site pyruvoyl group is generated from an internal serine residue via an autocatalytic post-translational modification. Two non-identical subunits are generated from the proenzyme in this reaction, and the pyruvate is formed at the N-terminus of the alpha chain, which is derived from the carboxyl end of the proenzyme. The post-translation cleavage follows an unusual pathway, termed non-hydrolytic serinolysis, in which the side chain hydroxyl group of the serine supplies its oxygen atom to form the C-terminus of the beta chain, while the remainder of the serine residue undergoes an oxidative deamination to produce ammonia and the pyruvoyl prosthetic group on the alpha chain.</text>
</comment>
<comment type="similarity">
    <text evidence="1">Belongs to the phosphatidylserine decarboxylase family. PSD-A subfamily.</text>
</comment>
<dbReference type="EC" id="4.1.1.65" evidence="1"/>
<dbReference type="EMBL" id="CP000872">
    <property type="protein sequence ID" value="ABX61531.1"/>
    <property type="molecule type" value="Genomic_DNA"/>
</dbReference>
<dbReference type="KEGG" id="bcs:BCAN_A0447"/>
<dbReference type="HOGENOM" id="CLU_072492_0_0_5"/>
<dbReference type="PhylomeDB" id="A9M8W7"/>
<dbReference type="UniPathway" id="UPA00558">
    <property type="reaction ID" value="UER00616"/>
</dbReference>
<dbReference type="Proteomes" id="UP000001385">
    <property type="component" value="Chromosome I"/>
</dbReference>
<dbReference type="GO" id="GO:0005886">
    <property type="term" value="C:plasma membrane"/>
    <property type="evidence" value="ECO:0007669"/>
    <property type="project" value="UniProtKB-SubCell"/>
</dbReference>
<dbReference type="GO" id="GO:0004609">
    <property type="term" value="F:phosphatidylserine decarboxylase activity"/>
    <property type="evidence" value="ECO:0007669"/>
    <property type="project" value="UniProtKB-UniRule"/>
</dbReference>
<dbReference type="GO" id="GO:0006646">
    <property type="term" value="P:phosphatidylethanolamine biosynthetic process"/>
    <property type="evidence" value="ECO:0007669"/>
    <property type="project" value="UniProtKB-UniRule"/>
</dbReference>
<dbReference type="HAMAP" id="MF_00664">
    <property type="entry name" value="PS_decarb_PSD_A"/>
    <property type="match status" value="1"/>
</dbReference>
<dbReference type="InterPro" id="IPR003817">
    <property type="entry name" value="PS_Dcarbxylase"/>
</dbReference>
<dbReference type="InterPro" id="IPR033175">
    <property type="entry name" value="PSD-A"/>
</dbReference>
<dbReference type="NCBIfam" id="NF003677">
    <property type="entry name" value="PRK05305.1-1"/>
    <property type="match status" value="1"/>
</dbReference>
<dbReference type="NCBIfam" id="NF003678">
    <property type="entry name" value="PRK05305.1-2"/>
    <property type="match status" value="1"/>
</dbReference>
<dbReference type="NCBIfam" id="NF003679">
    <property type="entry name" value="PRK05305.1-3"/>
    <property type="match status" value="1"/>
</dbReference>
<dbReference type="NCBIfam" id="NF003685">
    <property type="entry name" value="PRK05305.2-5"/>
    <property type="match status" value="1"/>
</dbReference>
<dbReference type="PANTHER" id="PTHR35809">
    <property type="entry name" value="ARCHAETIDYLSERINE DECARBOXYLASE PROENZYME-RELATED"/>
    <property type="match status" value="1"/>
</dbReference>
<dbReference type="PANTHER" id="PTHR35809:SF1">
    <property type="entry name" value="ARCHAETIDYLSERINE DECARBOXYLASE PROENZYME-RELATED"/>
    <property type="match status" value="1"/>
</dbReference>
<dbReference type="Pfam" id="PF02666">
    <property type="entry name" value="PS_Dcarbxylase"/>
    <property type="match status" value="1"/>
</dbReference>
<accession>A9M8W7</accession>
<organism>
    <name type="scientific">Brucella canis (strain ATCC 23365 / NCTC 10854 / RM-666)</name>
    <dbReference type="NCBI Taxonomy" id="483179"/>
    <lineage>
        <taxon>Bacteria</taxon>
        <taxon>Pseudomonadati</taxon>
        <taxon>Pseudomonadota</taxon>
        <taxon>Alphaproteobacteria</taxon>
        <taxon>Hyphomicrobiales</taxon>
        <taxon>Brucellaceae</taxon>
        <taxon>Brucella/Ochrobactrum group</taxon>
        <taxon>Brucella</taxon>
    </lineage>
</organism>
<protein>
    <recommendedName>
        <fullName evidence="1">Phosphatidylserine decarboxylase proenzyme</fullName>
        <ecNumber evidence="1">4.1.1.65</ecNumber>
    </recommendedName>
    <component>
        <recommendedName>
            <fullName evidence="1">Phosphatidylserine decarboxylase alpha chain</fullName>
        </recommendedName>
    </component>
    <component>
        <recommendedName>
            <fullName evidence="1">Phosphatidylserine decarboxylase beta chain</fullName>
        </recommendedName>
    </component>
</protein>
<evidence type="ECO:0000255" key="1">
    <source>
        <dbReference type="HAMAP-Rule" id="MF_00664"/>
    </source>
</evidence>
<gene>
    <name evidence="1" type="primary">psd</name>
    <name type="ordered locus">BCAN_A0447</name>
</gene>
<sequence>MSLTDTIRNTFVPIHREGYPFIAGFFVVSLILGWLWDPLFWIGMVLTVWCIYFYRDPERVTPMDDDLVISPADGKVSFVGLAVPPAELDLGYEPMTRVSVFMNVFSVHINRSPVRGKIDKVVHRPGKFLNAELDKASTENERNSVLIESPHGKVGVVQIAGLVARRIVCWSNQDDELSVGERFGLIRFGSRVDVYLPSDATVRVAVGQTAIAGETVLADYGTERGEPVVRIA</sequence>
<reference key="1">
    <citation type="submission" date="2007-10" db="EMBL/GenBank/DDBJ databases">
        <title>Brucella canis ATCC 23365 whole genome shotgun sequencing project.</title>
        <authorList>
            <person name="Setubal J.C."/>
            <person name="Bowns C."/>
            <person name="Boyle S."/>
            <person name="Crasta O.R."/>
            <person name="Czar M.J."/>
            <person name="Dharmanolla C."/>
            <person name="Gillespie J.J."/>
            <person name="Kenyon R.W."/>
            <person name="Lu J."/>
            <person name="Mane S."/>
            <person name="Mohapatra S."/>
            <person name="Nagrani S."/>
            <person name="Purkayastha A."/>
            <person name="Rajasimha H.K."/>
            <person name="Shallom J.M."/>
            <person name="Shallom S."/>
            <person name="Shukla M."/>
            <person name="Snyder E.E."/>
            <person name="Sobral B.W."/>
            <person name="Wattam A.R."/>
            <person name="Will R."/>
            <person name="Williams K."/>
            <person name="Yoo H."/>
            <person name="Bruce D."/>
            <person name="Detter C."/>
            <person name="Munk C."/>
            <person name="Brettin T.S."/>
        </authorList>
    </citation>
    <scope>NUCLEOTIDE SEQUENCE [LARGE SCALE GENOMIC DNA]</scope>
    <source>
        <strain>ATCC 23365 / NCTC 10854 / RM-666</strain>
    </source>
</reference>
<proteinExistence type="inferred from homology"/>
<keyword id="KW-1003">Cell membrane</keyword>
<keyword id="KW-0210">Decarboxylase</keyword>
<keyword id="KW-0444">Lipid biosynthesis</keyword>
<keyword id="KW-0443">Lipid metabolism</keyword>
<keyword id="KW-0456">Lyase</keyword>
<keyword id="KW-0472">Membrane</keyword>
<keyword id="KW-0594">Phospholipid biosynthesis</keyword>
<keyword id="KW-1208">Phospholipid metabolism</keyword>
<keyword id="KW-0670">Pyruvate</keyword>
<keyword id="KW-1185">Reference proteome</keyword>
<keyword id="KW-0865">Zymogen</keyword>